<evidence type="ECO:0000255" key="1">
    <source>
        <dbReference type="HAMAP-Rule" id="MF_00551"/>
    </source>
</evidence>
<comment type="catalytic activity">
    <reaction evidence="1">
        <text>uridine + ATP = UMP + ADP + H(+)</text>
        <dbReference type="Rhea" id="RHEA:16825"/>
        <dbReference type="ChEBI" id="CHEBI:15378"/>
        <dbReference type="ChEBI" id="CHEBI:16704"/>
        <dbReference type="ChEBI" id="CHEBI:30616"/>
        <dbReference type="ChEBI" id="CHEBI:57865"/>
        <dbReference type="ChEBI" id="CHEBI:456216"/>
        <dbReference type="EC" id="2.7.1.48"/>
    </reaction>
</comment>
<comment type="catalytic activity">
    <reaction evidence="1">
        <text>cytidine + ATP = CMP + ADP + H(+)</text>
        <dbReference type="Rhea" id="RHEA:24674"/>
        <dbReference type="ChEBI" id="CHEBI:15378"/>
        <dbReference type="ChEBI" id="CHEBI:17562"/>
        <dbReference type="ChEBI" id="CHEBI:30616"/>
        <dbReference type="ChEBI" id="CHEBI:60377"/>
        <dbReference type="ChEBI" id="CHEBI:456216"/>
        <dbReference type="EC" id="2.7.1.48"/>
    </reaction>
</comment>
<comment type="pathway">
    <text evidence="1">Pyrimidine metabolism; CTP biosynthesis via salvage pathway; CTP from cytidine: step 1/3.</text>
</comment>
<comment type="pathway">
    <text evidence="1">Pyrimidine metabolism; UMP biosynthesis via salvage pathway; UMP from uridine: step 1/1.</text>
</comment>
<comment type="subcellular location">
    <subcellularLocation>
        <location evidence="1">Cytoplasm</location>
    </subcellularLocation>
</comment>
<comment type="similarity">
    <text evidence="1">Belongs to the uridine kinase family.</text>
</comment>
<reference key="1">
    <citation type="journal article" date="2001" name="Genome Res.">
        <title>The complete genome sequence of the lactic acid bacterium Lactococcus lactis ssp. lactis IL1403.</title>
        <authorList>
            <person name="Bolotin A."/>
            <person name="Wincker P."/>
            <person name="Mauger S."/>
            <person name="Jaillon O."/>
            <person name="Malarme K."/>
            <person name="Weissenbach J."/>
            <person name="Ehrlich S.D."/>
            <person name="Sorokin A."/>
        </authorList>
    </citation>
    <scope>NUCLEOTIDE SEQUENCE [LARGE SCALE GENOMIC DNA]</scope>
    <source>
        <strain>IL1403</strain>
    </source>
</reference>
<proteinExistence type="inferred from homology"/>
<dbReference type="EC" id="2.7.1.48" evidence="1"/>
<dbReference type="EMBL" id="AE005176">
    <property type="protein sequence ID" value="AAK05758.1"/>
    <property type="molecule type" value="Genomic_DNA"/>
</dbReference>
<dbReference type="PIR" id="D86832">
    <property type="entry name" value="D86832"/>
</dbReference>
<dbReference type="RefSeq" id="NP_267816.1">
    <property type="nucleotide sequence ID" value="NC_002662.1"/>
</dbReference>
<dbReference type="RefSeq" id="WP_010906081.1">
    <property type="nucleotide sequence ID" value="NC_002662.1"/>
</dbReference>
<dbReference type="SMR" id="Q9CF21"/>
<dbReference type="PaxDb" id="272623-L108994"/>
<dbReference type="EnsemblBacteria" id="AAK05758">
    <property type="protein sequence ID" value="AAK05758"/>
    <property type="gene ID" value="L108994"/>
</dbReference>
<dbReference type="GeneID" id="89633859"/>
<dbReference type="KEGG" id="lla:L108994"/>
<dbReference type="PATRIC" id="fig|272623.7.peg.1781"/>
<dbReference type="eggNOG" id="COG0572">
    <property type="taxonomic scope" value="Bacteria"/>
</dbReference>
<dbReference type="HOGENOM" id="CLU_021278_1_2_9"/>
<dbReference type="OrthoDB" id="9777642at2"/>
<dbReference type="UniPathway" id="UPA00574">
    <property type="reaction ID" value="UER00637"/>
</dbReference>
<dbReference type="UniPathway" id="UPA00579">
    <property type="reaction ID" value="UER00640"/>
</dbReference>
<dbReference type="Proteomes" id="UP000002196">
    <property type="component" value="Chromosome"/>
</dbReference>
<dbReference type="GO" id="GO:0005737">
    <property type="term" value="C:cytoplasm"/>
    <property type="evidence" value="ECO:0007669"/>
    <property type="project" value="UniProtKB-SubCell"/>
</dbReference>
<dbReference type="GO" id="GO:0005524">
    <property type="term" value="F:ATP binding"/>
    <property type="evidence" value="ECO:0007669"/>
    <property type="project" value="UniProtKB-UniRule"/>
</dbReference>
<dbReference type="GO" id="GO:0043771">
    <property type="term" value="F:cytidine kinase activity"/>
    <property type="evidence" value="ECO:0007669"/>
    <property type="project" value="RHEA"/>
</dbReference>
<dbReference type="GO" id="GO:0004849">
    <property type="term" value="F:uridine kinase activity"/>
    <property type="evidence" value="ECO:0007669"/>
    <property type="project" value="UniProtKB-UniRule"/>
</dbReference>
<dbReference type="GO" id="GO:0044211">
    <property type="term" value="P:CTP salvage"/>
    <property type="evidence" value="ECO:0007669"/>
    <property type="project" value="UniProtKB-UniRule"/>
</dbReference>
<dbReference type="GO" id="GO:0044206">
    <property type="term" value="P:UMP salvage"/>
    <property type="evidence" value="ECO:0007669"/>
    <property type="project" value="UniProtKB-UniRule"/>
</dbReference>
<dbReference type="CDD" id="cd02023">
    <property type="entry name" value="UMPK"/>
    <property type="match status" value="1"/>
</dbReference>
<dbReference type="Gene3D" id="3.40.50.300">
    <property type="entry name" value="P-loop containing nucleotide triphosphate hydrolases"/>
    <property type="match status" value="1"/>
</dbReference>
<dbReference type="HAMAP" id="MF_00551">
    <property type="entry name" value="Uridine_kinase"/>
    <property type="match status" value="1"/>
</dbReference>
<dbReference type="InterPro" id="IPR027417">
    <property type="entry name" value="P-loop_NTPase"/>
</dbReference>
<dbReference type="InterPro" id="IPR006083">
    <property type="entry name" value="PRK/URK"/>
</dbReference>
<dbReference type="InterPro" id="IPR026008">
    <property type="entry name" value="Uridine_kinase"/>
</dbReference>
<dbReference type="InterPro" id="IPR000764">
    <property type="entry name" value="Uridine_kinase-like"/>
</dbReference>
<dbReference type="NCBIfam" id="NF004018">
    <property type="entry name" value="PRK05480.1"/>
    <property type="match status" value="1"/>
</dbReference>
<dbReference type="NCBIfam" id="TIGR00235">
    <property type="entry name" value="udk"/>
    <property type="match status" value="1"/>
</dbReference>
<dbReference type="PANTHER" id="PTHR10285">
    <property type="entry name" value="URIDINE KINASE"/>
    <property type="match status" value="1"/>
</dbReference>
<dbReference type="Pfam" id="PF00485">
    <property type="entry name" value="PRK"/>
    <property type="match status" value="1"/>
</dbReference>
<dbReference type="PRINTS" id="PR00988">
    <property type="entry name" value="URIDINKINASE"/>
</dbReference>
<dbReference type="SUPFAM" id="SSF52540">
    <property type="entry name" value="P-loop containing nucleoside triphosphate hydrolases"/>
    <property type="match status" value="1"/>
</dbReference>
<gene>
    <name evidence="1" type="primary">udk</name>
    <name type="ordered locus">LL1660</name>
    <name type="ORF">L108994</name>
</gene>
<sequence>MKKTLIIGVTGGSASGKTSVSHAILETFSNERIAMIEHDSYYKDQSHLTFEERTKTNYDHPLAFDTDYLIAQLKELQYGRAVDIPIYDYAKHTRSQETYRQEPVDVLIVEGILVLEDERLRDLMDIKIFVDTDDDVRIIRRIRRDIEERGRTLDSVITQYLDAVKPMYHQFIEPTKRYADVIIPEGVSNTVGVDIITTKIASILND</sequence>
<feature type="chain" id="PRO_0000164475" description="Uridine kinase">
    <location>
        <begin position="1"/>
        <end position="206"/>
    </location>
</feature>
<feature type="binding site" evidence="1">
    <location>
        <begin position="11"/>
        <end position="18"/>
    </location>
    <ligand>
        <name>ATP</name>
        <dbReference type="ChEBI" id="CHEBI:30616"/>
    </ligand>
</feature>
<protein>
    <recommendedName>
        <fullName evidence="1">Uridine kinase</fullName>
        <ecNumber evidence="1">2.7.1.48</ecNumber>
    </recommendedName>
    <alternativeName>
        <fullName evidence="1">Cytidine monophosphokinase</fullName>
    </alternativeName>
    <alternativeName>
        <fullName evidence="1">Uridine monophosphokinase</fullName>
    </alternativeName>
</protein>
<accession>Q9CF21</accession>
<name>URK_LACLA</name>
<keyword id="KW-0067">ATP-binding</keyword>
<keyword id="KW-0963">Cytoplasm</keyword>
<keyword id="KW-0418">Kinase</keyword>
<keyword id="KW-0547">Nucleotide-binding</keyword>
<keyword id="KW-1185">Reference proteome</keyword>
<keyword id="KW-0808">Transferase</keyword>
<organism>
    <name type="scientific">Lactococcus lactis subsp. lactis (strain IL1403)</name>
    <name type="common">Streptococcus lactis</name>
    <dbReference type="NCBI Taxonomy" id="272623"/>
    <lineage>
        <taxon>Bacteria</taxon>
        <taxon>Bacillati</taxon>
        <taxon>Bacillota</taxon>
        <taxon>Bacilli</taxon>
        <taxon>Lactobacillales</taxon>
        <taxon>Streptococcaceae</taxon>
        <taxon>Lactococcus</taxon>
    </lineage>
</organism>